<name>TS14A_SOLHA</name>
<organism>
    <name type="scientific">Solanum habrochaites</name>
    <name type="common">Wild tomato</name>
    <name type="synonym">Lycopersicon hirsutum</name>
    <dbReference type="NCBI Taxonomy" id="62890"/>
    <lineage>
        <taxon>Eukaryota</taxon>
        <taxon>Viridiplantae</taxon>
        <taxon>Streptophyta</taxon>
        <taxon>Embryophyta</taxon>
        <taxon>Tracheophyta</taxon>
        <taxon>Spermatophyta</taxon>
        <taxon>Magnoliopsida</taxon>
        <taxon>eudicotyledons</taxon>
        <taxon>Gunneridae</taxon>
        <taxon>Pentapetalae</taxon>
        <taxon>asterids</taxon>
        <taxon>lamiids</taxon>
        <taxon>Solanales</taxon>
        <taxon>Solanaceae</taxon>
        <taxon>Solanoideae</taxon>
        <taxon>Solaneae</taxon>
        <taxon>Solanum</taxon>
        <taxon>Solanum subgen. Lycopersicon</taxon>
    </lineage>
</organism>
<keyword id="KW-0456">Lyase</keyword>
<keyword id="KW-0460">Magnesium</keyword>
<keyword id="KW-0479">Metal-binding</keyword>
<comment type="function">
    <text evidence="3">Sesquiterpene synthase involved in the biosynthesis of volatile compounds (PubMed:21818683). Mediates the conversion of (2E,6E)-farnesyl diphosphate ((EE)-FPP) into beta-bisabolene, beta-farnesene, (E)-gamma-bisabolene, beta-acoradiene, selinene and (Z)-alpha-bisabolene (PubMed:21818683). Low or no activity with (2Z,6Z)-farnesyl diphosphate ((ZZ)-FPP) (PubMed:21818683). Can act with a low efficiency as a monoterpene synthase with geranyl diphosphate (GPP) as substrate, thus producing beta-myrcene and limonene (PubMed:21818683).</text>
</comment>
<comment type="catalytic activity">
    <reaction evidence="3">
        <text>(2E,6E)-farnesyl diphosphate = beta-bisabolene + diphosphate</text>
        <dbReference type="Rhea" id="RHEA:68528"/>
        <dbReference type="ChEBI" id="CHEBI:33019"/>
        <dbReference type="ChEBI" id="CHEBI:49249"/>
        <dbReference type="ChEBI" id="CHEBI:175763"/>
    </reaction>
    <physiologicalReaction direction="left-to-right" evidence="3">
        <dbReference type="Rhea" id="RHEA:68529"/>
    </physiologicalReaction>
</comment>
<comment type="catalytic activity">
    <reaction evidence="3">
        <text>(2E,6E)-farnesyl diphosphate = (Z)-alpha-bisabolene + diphosphate</text>
        <dbReference type="Rhea" id="RHEA:68532"/>
        <dbReference type="ChEBI" id="CHEBI:33019"/>
        <dbReference type="ChEBI" id="CHEBI:49241"/>
        <dbReference type="ChEBI" id="CHEBI:175763"/>
    </reaction>
    <physiologicalReaction direction="left-to-right" evidence="3">
        <dbReference type="Rhea" id="RHEA:68533"/>
    </physiologicalReaction>
</comment>
<comment type="catalytic activity">
    <reaction evidence="3">
        <text>(2E,6E)-farnesyl diphosphate = beta-acoradiene + diphosphate</text>
        <dbReference type="Rhea" id="RHEA:68520"/>
        <dbReference type="ChEBI" id="CHEBI:33019"/>
        <dbReference type="ChEBI" id="CHEBI:172925"/>
        <dbReference type="ChEBI" id="CHEBI:175763"/>
    </reaction>
    <physiologicalReaction direction="left-to-right" evidence="3">
        <dbReference type="Rhea" id="RHEA:68521"/>
    </physiologicalReaction>
</comment>
<comment type="catalytic activity">
    <reaction evidence="3">
        <text>(2E,6E)-farnesyl diphosphate = (E)-gamma-bisabolene + diphosphate</text>
        <dbReference type="Rhea" id="RHEA:28298"/>
        <dbReference type="ChEBI" id="CHEBI:33019"/>
        <dbReference type="ChEBI" id="CHEBI:49239"/>
        <dbReference type="ChEBI" id="CHEBI:175763"/>
        <dbReference type="EC" id="4.2.3.59"/>
    </reaction>
    <physiologicalReaction direction="left-to-right" evidence="3">
        <dbReference type="Rhea" id="RHEA:28299"/>
    </physiologicalReaction>
</comment>
<comment type="catalytic activity">
    <reaction evidence="3">
        <text>(2E,6E)-farnesyl diphosphate = (E)-beta-farnesene + diphosphate</text>
        <dbReference type="Rhea" id="RHEA:27425"/>
        <dbReference type="ChEBI" id="CHEBI:10418"/>
        <dbReference type="ChEBI" id="CHEBI:33019"/>
        <dbReference type="ChEBI" id="CHEBI:175763"/>
        <dbReference type="EC" id="4.2.3.47"/>
    </reaction>
    <physiologicalReaction direction="left-to-right" evidence="3">
        <dbReference type="Rhea" id="RHEA:27426"/>
    </physiologicalReaction>
</comment>
<comment type="catalytic activity">
    <reaction evidence="3">
        <text>(2E,6E)-farnesyl diphosphate = (Z)-beta-farnesene + diphosphate</text>
        <dbReference type="Rhea" id="RHEA:68508"/>
        <dbReference type="ChEBI" id="CHEBI:33019"/>
        <dbReference type="ChEBI" id="CHEBI:39242"/>
        <dbReference type="ChEBI" id="CHEBI:175763"/>
    </reaction>
    <physiologicalReaction direction="left-to-right" evidence="3">
        <dbReference type="Rhea" id="RHEA:68509"/>
    </physiologicalReaction>
</comment>
<comment type="catalytic activity">
    <reaction evidence="3">
        <text>(2E)-geranyl diphosphate = limonene + diphosphate</text>
        <dbReference type="Rhea" id="RHEA:68640"/>
        <dbReference type="ChEBI" id="CHEBI:15384"/>
        <dbReference type="ChEBI" id="CHEBI:33019"/>
        <dbReference type="ChEBI" id="CHEBI:58057"/>
    </reaction>
    <physiologicalReaction direction="left-to-right" evidence="3">
        <dbReference type="Rhea" id="RHEA:68641"/>
    </physiologicalReaction>
</comment>
<comment type="catalytic activity">
    <reaction evidence="3">
        <text>(2E)-geranyl diphosphate = beta-myrcene + diphosphate</text>
        <dbReference type="Rhea" id="RHEA:16965"/>
        <dbReference type="ChEBI" id="CHEBI:17221"/>
        <dbReference type="ChEBI" id="CHEBI:33019"/>
        <dbReference type="ChEBI" id="CHEBI:58057"/>
        <dbReference type="EC" id="4.2.3.15"/>
    </reaction>
    <physiologicalReaction direction="left-to-right" evidence="3">
        <dbReference type="Rhea" id="RHEA:16966"/>
    </physiologicalReaction>
</comment>
<comment type="cofactor">
    <cofactor evidence="1">
        <name>Mg(2+)</name>
        <dbReference type="ChEBI" id="CHEBI:18420"/>
    </cofactor>
    <cofactor evidence="1">
        <name>Mn(2+)</name>
        <dbReference type="ChEBI" id="CHEBI:29035"/>
    </cofactor>
    <text evidence="1">Binds 3 Mg(2+) or Mn(2+) ions per subunit.</text>
</comment>
<comment type="pathway">
    <text evidence="3">Secondary metabolite biosynthesis; terpenoid biosynthesis.</text>
</comment>
<comment type="tissue specificity">
    <text evidence="3">Mostly expressed in stem trichomes.</text>
</comment>
<comment type="domain">
    <text evidence="2">The Asp-Asp-Xaa-Xaa-Asp/Glu (DDXXD/E) motif is important for the catalytic activity, presumably through binding to Mg(2+).</text>
</comment>
<comment type="similarity">
    <text evidence="5">Belongs to the terpene synthase family. Tpsa subfamily.</text>
</comment>
<dbReference type="EC" id="4.2.3.47" evidence="3"/>
<dbReference type="EC" id="4.2.3.59" evidence="3"/>
<dbReference type="EC" id="4.2.3.-" evidence="3"/>
<dbReference type="EC" id="4.2.3.15" evidence="3"/>
<dbReference type="EMBL" id="JN402390">
    <property type="protein sequence ID" value="AEM23827.1"/>
    <property type="molecule type" value="mRNA"/>
</dbReference>
<dbReference type="SMR" id="G8H5M9"/>
<dbReference type="UniPathway" id="UPA00213"/>
<dbReference type="GO" id="GO:0000287">
    <property type="term" value="F:magnesium ion binding"/>
    <property type="evidence" value="ECO:0007669"/>
    <property type="project" value="InterPro"/>
</dbReference>
<dbReference type="GO" id="GO:0010333">
    <property type="term" value="F:terpene synthase activity"/>
    <property type="evidence" value="ECO:0000314"/>
    <property type="project" value="UniProtKB"/>
</dbReference>
<dbReference type="GO" id="GO:0016102">
    <property type="term" value="P:diterpenoid biosynthetic process"/>
    <property type="evidence" value="ECO:0007669"/>
    <property type="project" value="InterPro"/>
</dbReference>
<dbReference type="GO" id="GO:0016114">
    <property type="term" value="P:terpenoid biosynthetic process"/>
    <property type="evidence" value="ECO:0000314"/>
    <property type="project" value="UniProtKB"/>
</dbReference>
<dbReference type="CDD" id="cd00684">
    <property type="entry name" value="Terpene_cyclase_plant_C1"/>
    <property type="match status" value="1"/>
</dbReference>
<dbReference type="FunFam" id="1.10.600.10:FF:000007">
    <property type="entry name" value="Isoprene synthase, chloroplastic"/>
    <property type="match status" value="1"/>
</dbReference>
<dbReference type="FunFam" id="1.50.10.130:FF:000001">
    <property type="entry name" value="Isoprene synthase, chloroplastic"/>
    <property type="match status" value="1"/>
</dbReference>
<dbReference type="Gene3D" id="1.10.600.10">
    <property type="entry name" value="Farnesyl Diphosphate Synthase"/>
    <property type="match status" value="1"/>
</dbReference>
<dbReference type="Gene3D" id="1.50.10.130">
    <property type="entry name" value="Terpene synthase, N-terminal domain"/>
    <property type="match status" value="1"/>
</dbReference>
<dbReference type="InterPro" id="IPR008949">
    <property type="entry name" value="Isoprenoid_synthase_dom_sf"/>
</dbReference>
<dbReference type="InterPro" id="IPR034741">
    <property type="entry name" value="Terpene_cyclase-like_1_C"/>
</dbReference>
<dbReference type="InterPro" id="IPR044814">
    <property type="entry name" value="Terpene_cyclase_plant_C1"/>
</dbReference>
<dbReference type="InterPro" id="IPR001906">
    <property type="entry name" value="Terpene_synth_N"/>
</dbReference>
<dbReference type="InterPro" id="IPR036965">
    <property type="entry name" value="Terpene_synth_N_sf"/>
</dbReference>
<dbReference type="InterPro" id="IPR050148">
    <property type="entry name" value="Terpene_synthase-like"/>
</dbReference>
<dbReference type="InterPro" id="IPR005630">
    <property type="entry name" value="Terpene_synthase_metal-bd"/>
</dbReference>
<dbReference type="InterPro" id="IPR008930">
    <property type="entry name" value="Terpenoid_cyclase/PrenylTrfase"/>
</dbReference>
<dbReference type="PANTHER" id="PTHR31225">
    <property type="entry name" value="OS04G0344100 PROTEIN-RELATED"/>
    <property type="match status" value="1"/>
</dbReference>
<dbReference type="PANTHER" id="PTHR31225:SF229">
    <property type="entry name" value="SESQUITERPENE SYNTHASE 14"/>
    <property type="match status" value="1"/>
</dbReference>
<dbReference type="Pfam" id="PF01397">
    <property type="entry name" value="Terpene_synth"/>
    <property type="match status" value="1"/>
</dbReference>
<dbReference type="Pfam" id="PF03936">
    <property type="entry name" value="Terpene_synth_C"/>
    <property type="match status" value="1"/>
</dbReference>
<dbReference type="SFLD" id="SFLDS00005">
    <property type="entry name" value="Isoprenoid_Synthase_Type_I"/>
    <property type="match status" value="1"/>
</dbReference>
<dbReference type="SFLD" id="SFLDG01019">
    <property type="entry name" value="Terpene_Cyclase_Like_1_C_Termi"/>
    <property type="match status" value="1"/>
</dbReference>
<dbReference type="SUPFAM" id="SSF48239">
    <property type="entry name" value="Terpenoid cyclases/Protein prenyltransferases"/>
    <property type="match status" value="1"/>
</dbReference>
<dbReference type="SUPFAM" id="SSF48576">
    <property type="entry name" value="Terpenoid synthases"/>
    <property type="match status" value="1"/>
</dbReference>
<gene>
    <name evidence="4" type="primary">TPS14a</name>
</gene>
<feature type="chain" id="PRO_0000454684" description="Sesquiterpene synthase 14a">
    <location>
        <begin position="1"/>
        <end position="554"/>
    </location>
</feature>
<feature type="short sequence motif" description="DDXXD motif" evidence="1">
    <location>
        <begin position="305"/>
        <end position="309"/>
    </location>
</feature>
<feature type="binding site" evidence="2">
    <location>
        <position position="305"/>
    </location>
    <ligand>
        <name>Mg(2+)</name>
        <dbReference type="ChEBI" id="CHEBI:18420"/>
        <label>1</label>
    </ligand>
</feature>
<feature type="binding site" evidence="2">
    <location>
        <position position="305"/>
    </location>
    <ligand>
        <name>Mg(2+)</name>
        <dbReference type="ChEBI" id="CHEBI:18420"/>
        <label>2</label>
    </ligand>
</feature>
<feature type="binding site" evidence="2">
    <location>
        <position position="309"/>
    </location>
    <ligand>
        <name>Mg(2+)</name>
        <dbReference type="ChEBI" id="CHEBI:18420"/>
        <label>1</label>
    </ligand>
</feature>
<feature type="binding site" evidence="2">
    <location>
        <position position="309"/>
    </location>
    <ligand>
        <name>Mg(2+)</name>
        <dbReference type="ChEBI" id="CHEBI:18420"/>
        <label>2</label>
    </ligand>
</feature>
<feature type="binding site" evidence="2">
    <location>
        <position position="449"/>
    </location>
    <ligand>
        <name>Mg(2+)</name>
        <dbReference type="ChEBI" id="CHEBI:18420"/>
        <label>3</label>
    </ligand>
</feature>
<feature type="binding site" evidence="2">
    <location>
        <position position="457"/>
    </location>
    <ligand>
        <name>Mg(2+)</name>
        <dbReference type="ChEBI" id="CHEBI:18420"/>
        <label>3</label>
    </ligand>
</feature>
<accession>G8H5M9</accession>
<protein>
    <recommendedName>
        <fullName evidence="4">Sesquiterpene synthase 14a</fullName>
        <shortName evidence="4">ShTPS14a</shortName>
    </recommendedName>
    <alternativeName>
        <fullName evidence="4">(E)-beta-farnesene synthase TPS14a</fullName>
        <ecNumber evidence="3">4.2.3.47</ecNumber>
    </alternativeName>
    <alternativeName>
        <fullName evidence="4">(E)-gamma-bisabolene synthase TPS14a</fullName>
        <ecNumber evidence="3">4.2.3.59</ecNumber>
    </alternativeName>
    <alternativeName>
        <fullName evidence="4">(Z)-alpha-bisabolene synthase TPS14a</fullName>
        <ecNumber evidence="3">4.2.3.-</ecNumber>
    </alternativeName>
    <alternativeName>
        <fullName evidence="4">(Z)-beta-farnesene synthase TPS14a</fullName>
        <ecNumber evidence="3">4.2.3.-</ecNumber>
    </alternativeName>
    <alternativeName>
        <fullName evidence="4">Beta-acoradiene synthase TPS14a</fullName>
        <ecNumber evidence="3">4.2.3.-</ecNumber>
    </alternativeName>
    <alternativeName>
        <fullName evidence="4">Beta-bisabolene synthase TPS14a</fullName>
        <ecNumber evidence="3">4.2.3.-</ecNumber>
    </alternativeName>
    <alternativeName>
        <fullName evidence="4">Beta-myrcene synthase TPS14a</fullName>
        <ecNumber evidence="3">4.2.3.15</ecNumber>
    </alternativeName>
    <alternativeName>
        <fullName evidence="4">Limonene synthase TPS14a</fullName>
        <ecNumber evidence="3">4.2.3.-</ecNumber>
    </alternativeName>
</protein>
<sequence length="554" mass="64973">MNQLAMVNTTITRPLANYHSSVWGNYFLSYTPQLTETSSQEKRELEELKEKVRQMLVETPDNSTQKLVLIDTIQRLGVAYHFENHIKISIQNIFDEFEKNKNKDNDDDLCVVALRFRLVRGQRHYMSSDVFTRFTNDDGKFKETLTKDVSGLLNLYEATHLRVHGEEILEDALSFTVTHLKSMSPKLDNSLKAQVSEALFQPIHTNIPRVVARKYIRIYENIESHDDLLLKFAKLDFHILQKMHQRELSELTRWWKYLDYENKYPYARDKLVECYFWATGVYFGPQYKRARKTLTKLIVIITITDDLYDAYATYDELVPYTDAVERCEISAMHSISPYMRPLYQVFLDYFDEMEKELTKDGKAHYVYYAKIETNKWIKSYLKEAEWLKNDIIPKCEEYKRNATITVSSQMILITCLIVAGEFISKETFEWMINESLIAPASSLINRLKDDIIGHEHEQQREHGASFIECYVKEYRASKQEAYVEARRQIANAWKDINTDYLHATQVPTFVLEPALNLSRLVDILQEDDFTDSQNFLKDTITLLFVDSVNSTSCG</sequence>
<evidence type="ECO:0000250" key="1">
    <source>
        <dbReference type="UniProtKB" id="A0A1C9J6A7"/>
    </source>
</evidence>
<evidence type="ECO:0000250" key="2">
    <source>
        <dbReference type="UniProtKB" id="Q40577"/>
    </source>
</evidence>
<evidence type="ECO:0000269" key="3">
    <source>
    </source>
</evidence>
<evidence type="ECO:0000303" key="4">
    <source>
    </source>
</evidence>
<evidence type="ECO:0000305" key="5"/>
<proteinExistence type="evidence at protein level"/>
<reference key="1">
    <citation type="journal article" date="2011" name="Plant Mol. Biol.">
        <title>RNA-seq discovery, functional characterization, and comparison of sesquiterpene synthases from Solanum lycopersicum and Solanum habrochaites trichomes.</title>
        <authorList>
            <person name="Bleeker P.M."/>
            <person name="Spyropoulou E.A."/>
            <person name="Diergaarde P.J."/>
            <person name="Volpin H."/>
            <person name="De Both M.T.J."/>
            <person name="Zerbe P."/>
            <person name="Bohlmann J."/>
            <person name="Falara V."/>
            <person name="Matsuba Y."/>
            <person name="Pichersky E."/>
            <person name="Haring M.A."/>
            <person name="Schuurink R.C."/>
        </authorList>
    </citation>
    <scope>NUCLEOTIDE SEQUENCE [MRNA]</scope>
    <scope>FUNCTION</scope>
    <scope>CATALYTIC ACTIVITY</scope>
    <scope>PATHWAY</scope>
    <scope>TISSUE SPECIFICITY</scope>
    <scope>GENE FAMILY</scope>
    <source>
        <strain>cv. PI127826</strain>
    </source>
</reference>